<gene>
    <name evidence="1" type="primary">rpl11</name>
    <name type="ordered locus">MJ0373</name>
</gene>
<reference key="1">
    <citation type="journal article" date="1996" name="Science">
        <title>Complete genome sequence of the methanogenic archaeon, Methanococcus jannaschii.</title>
        <authorList>
            <person name="Bult C.J."/>
            <person name="White O."/>
            <person name="Olsen G.J."/>
            <person name="Zhou L."/>
            <person name="Fleischmann R.D."/>
            <person name="Sutton G.G."/>
            <person name="Blake J.A."/>
            <person name="FitzGerald L.M."/>
            <person name="Clayton R.A."/>
            <person name="Gocayne J.D."/>
            <person name="Kerlavage A.R."/>
            <person name="Dougherty B.A."/>
            <person name="Tomb J.-F."/>
            <person name="Adams M.D."/>
            <person name="Reich C.I."/>
            <person name="Overbeek R."/>
            <person name="Kirkness E.F."/>
            <person name="Weinstock K.G."/>
            <person name="Merrick J.M."/>
            <person name="Glodek A."/>
            <person name="Scott J.L."/>
            <person name="Geoghagen N.S.M."/>
            <person name="Weidman J.F."/>
            <person name="Fuhrmann J.L."/>
            <person name="Nguyen D."/>
            <person name="Utterback T.R."/>
            <person name="Kelley J.M."/>
            <person name="Peterson J.D."/>
            <person name="Sadow P.W."/>
            <person name="Hanna M.C."/>
            <person name="Cotton M.D."/>
            <person name="Roberts K.M."/>
            <person name="Hurst M.A."/>
            <person name="Kaine B.P."/>
            <person name="Borodovsky M."/>
            <person name="Klenk H.-P."/>
            <person name="Fraser C.M."/>
            <person name="Smith H.O."/>
            <person name="Woese C.R."/>
            <person name="Venter J.C."/>
        </authorList>
    </citation>
    <scope>NUCLEOTIDE SEQUENCE [LARGE SCALE GENOMIC DNA]</scope>
    <source>
        <strain>ATCC 43067 / DSM 2661 / JAL-1 / JCM 10045 / NBRC 100440</strain>
    </source>
</reference>
<evidence type="ECO:0000255" key="1">
    <source>
        <dbReference type="HAMAP-Rule" id="MF_00736"/>
    </source>
</evidence>
<evidence type="ECO:0000305" key="2"/>
<evidence type="ECO:0007829" key="3">
    <source>
        <dbReference type="PDB" id="5COL"/>
    </source>
</evidence>
<evidence type="ECO:0007829" key="4">
    <source>
        <dbReference type="PDB" id="5D8H"/>
    </source>
</evidence>
<accession>P54030</accession>
<sequence length="161" mass="17490">MAKEVVEVLVTGGRATAGPPLGPAIGPLGVNVMQVVKEINEKTKDYEGMQVPVKVIVDTETRKFEIEVGIPPTTALIKKELGIETAAHEPRHEVVGNLTLEQVIKIAKMKKDAMLSYTLKNAVKEVLGTCGSMGVTVEGKDPKEVQKEIDAGVYDEYFKEE</sequence>
<proteinExistence type="evidence at protein level"/>
<keyword id="KW-0002">3D-structure</keyword>
<keyword id="KW-1185">Reference proteome</keyword>
<keyword id="KW-0687">Ribonucleoprotein</keyword>
<keyword id="KW-0689">Ribosomal protein</keyword>
<keyword id="KW-0694">RNA-binding</keyword>
<keyword id="KW-0699">rRNA-binding</keyword>
<dbReference type="EMBL" id="L77117">
    <property type="protein sequence ID" value="AAB98362.1"/>
    <property type="molecule type" value="Genomic_DNA"/>
</dbReference>
<dbReference type="PIR" id="E64346">
    <property type="entry name" value="E64346"/>
</dbReference>
<dbReference type="RefSeq" id="WP_010869872.1">
    <property type="nucleotide sequence ID" value="NC_000909.1"/>
</dbReference>
<dbReference type="PDB" id="5COL">
    <property type="method" value="X-ray"/>
    <property type="resolution" value="2.25 A"/>
    <property type="chains" value="A/B=1-161"/>
</dbReference>
<dbReference type="PDB" id="5D8H">
    <property type="method" value="X-ray"/>
    <property type="resolution" value="2.80 A"/>
    <property type="chains" value="C=1-161"/>
</dbReference>
<dbReference type="PDB" id="5DAR">
    <property type="method" value="X-ray"/>
    <property type="resolution" value="2.90 A"/>
    <property type="chains" value="C/F=1-161"/>
</dbReference>
<dbReference type="PDBsum" id="5COL"/>
<dbReference type="PDBsum" id="5D8H"/>
<dbReference type="PDBsum" id="5DAR"/>
<dbReference type="SMR" id="P54030"/>
<dbReference type="FunCoup" id="P54030">
    <property type="interactions" value="170"/>
</dbReference>
<dbReference type="STRING" id="243232.MJ_0373"/>
<dbReference type="PaxDb" id="243232-MJ_0373"/>
<dbReference type="EnsemblBacteria" id="AAB98362">
    <property type="protein sequence ID" value="AAB98362"/>
    <property type="gene ID" value="MJ_0373"/>
</dbReference>
<dbReference type="GeneID" id="1451230"/>
<dbReference type="KEGG" id="mja:MJ_0373"/>
<dbReference type="eggNOG" id="arCOG04372">
    <property type="taxonomic scope" value="Archaea"/>
</dbReference>
<dbReference type="HOGENOM" id="CLU_074237_4_0_2"/>
<dbReference type="InParanoid" id="P54030"/>
<dbReference type="OrthoDB" id="8842at2157"/>
<dbReference type="PhylomeDB" id="P54030"/>
<dbReference type="Proteomes" id="UP000000805">
    <property type="component" value="Chromosome"/>
</dbReference>
<dbReference type="GO" id="GO:0015934">
    <property type="term" value="C:large ribosomal subunit"/>
    <property type="evidence" value="ECO:0000318"/>
    <property type="project" value="GO_Central"/>
</dbReference>
<dbReference type="GO" id="GO:0070180">
    <property type="term" value="F:large ribosomal subunit rRNA binding"/>
    <property type="evidence" value="ECO:0000318"/>
    <property type="project" value="GO_Central"/>
</dbReference>
<dbReference type="GO" id="GO:0003735">
    <property type="term" value="F:structural constituent of ribosome"/>
    <property type="evidence" value="ECO:0000318"/>
    <property type="project" value="GO_Central"/>
</dbReference>
<dbReference type="GO" id="GO:0006412">
    <property type="term" value="P:translation"/>
    <property type="evidence" value="ECO:0000318"/>
    <property type="project" value="GO_Central"/>
</dbReference>
<dbReference type="CDD" id="cd00349">
    <property type="entry name" value="Ribosomal_L11"/>
    <property type="match status" value="1"/>
</dbReference>
<dbReference type="FunFam" id="1.10.10.250:FF:000006">
    <property type="entry name" value="50S ribosomal protein L11"/>
    <property type="match status" value="1"/>
</dbReference>
<dbReference type="FunFam" id="3.30.1550.10:FF:000007">
    <property type="entry name" value="50S ribosomal protein L11"/>
    <property type="match status" value="1"/>
</dbReference>
<dbReference type="Gene3D" id="1.10.10.250">
    <property type="entry name" value="Ribosomal protein L11, C-terminal domain"/>
    <property type="match status" value="1"/>
</dbReference>
<dbReference type="Gene3D" id="3.30.1550.10">
    <property type="entry name" value="Ribosomal protein L11/L12, N-terminal domain"/>
    <property type="match status" value="1"/>
</dbReference>
<dbReference type="HAMAP" id="MF_00736">
    <property type="entry name" value="Ribosomal_uL11"/>
    <property type="match status" value="1"/>
</dbReference>
<dbReference type="InterPro" id="IPR000911">
    <property type="entry name" value="Ribosomal_uL11"/>
</dbReference>
<dbReference type="InterPro" id="IPR020783">
    <property type="entry name" value="Ribosomal_uL11_C"/>
</dbReference>
<dbReference type="InterPro" id="IPR036769">
    <property type="entry name" value="Ribosomal_uL11_C_sf"/>
</dbReference>
<dbReference type="InterPro" id="IPR020785">
    <property type="entry name" value="Ribosomal_uL11_CS"/>
</dbReference>
<dbReference type="InterPro" id="IPR020784">
    <property type="entry name" value="Ribosomal_uL11_N"/>
</dbReference>
<dbReference type="InterPro" id="IPR036796">
    <property type="entry name" value="Ribosomal_uL11_N_sf"/>
</dbReference>
<dbReference type="NCBIfam" id="NF002232">
    <property type="entry name" value="PRK01143.1"/>
    <property type="match status" value="1"/>
</dbReference>
<dbReference type="PANTHER" id="PTHR11661">
    <property type="entry name" value="60S RIBOSOMAL PROTEIN L12"/>
    <property type="match status" value="1"/>
</dbReference>
<dbReference type="PANTHER" id="PTHR11661:SF1">
    <property type="entry name" value="LARGE RIBOSOMAL SUBUNIT PROTEIN UL11M"/>
    <property type="match status" value="1"/>
</dbReference>
<dbReference type="Pfam" id="PF00298">
    <property type="entry name" value="Ribosomal_L11"/>
    <property type="match status" value="1"/>
</dbReference>
<dbReference type="Pfam" id="PF03946">
    <property type="entry name" value="Ribosomal_L11_N"/>
    <property type="match status" value="1"/>
</dbReference>
<dbReference type="SMART" id="SM00649">
    <property type="entry name" value="RL11"/>
    <property type="match status" value="1"/>
</dbReference>
<dbReference type="SUPFAM" id="SSF54747">
    <property type="entry name" value="Ribosomal L11/L12e N-terminal domain"/>
    <property type="match status" value="1"/>
</dbReference>
<dbReference type="SUPFAM" id="SSF46906">
    <property type="entry name" value="Ribosomal protein L11, C-terminal domain"/>
    <property type="match status" value="1"/>
</dbReference>
<dbReference type="PROSITE" id="PS00359">
    <property type="entry name" value="RIBOSOMAL_L11"/>
    <property type="match status" value="1"/>
</dbReference>
<protein>
    <recommendedName>
        <fullName evidence="1">Large ribosomal subunit protein uL11</fullName>
    </recommendedName>
    <alternativeName>
        <fullName evidence="2">50S ribosomal protein L11</fullName>
    </alternativeName>
</protein>
<name>RL11_METJA</name>
<feature type="chain" id="PRO_0000104435" description="Large ribosomal subunit protein uL11">
    <location>
        <begin position="1"/>
        <end position="161"/>
    </location>
</feature>
<feature type="strand" evidence="3">
    <location>
        <begin position="3"/>
        <end position="11"/>
    </location>
</feature>
<feature type="strand" evidence="4">
    <location>
        <begin position="17"/>
        <end position="19"/>
    </location>
</feature>
<feature type="helix" evidence="3">
    <location>
        <begin position="21"/>
        <end position="25"/>
    </location>
</feature>
<feature type="turn" evidence="3">
    <location>
        <begin position="26"/>
        <end position="29"/>
    </location>
</feature>
<feature type="helix" evidence="3">
    <location>
        <begin position="32"/>
        <end position="42"/>
    </location>
</feature>
<feature type="helix" evidence="3">
    <location>
        <begin position="43"/>
        <end position="46"/>
    </location>
</feature>
<feature type="strand" evidence="3">
    <location>
        <begin position="49"/>
        <end position="58"/>
    </location>
</feature>
<feature type="turn" evidence="3">
    <location>
        <begin position="59"/>
        <end position="61"/>
    </location>
</feature>
<feature type="strand" evidence="3">
    <location>
        <begin position="64"/>
        <end position="68"/>
    </location>
</feature>
<feature type="helix" evidence="3">
    <location>
        <begin position="73"/>
        <end position="81"/>
    </location>
</feature>
<feature type="strand" evidence="4">
    <location>
        <begin position="88"/>
        <end position="90"/>
    </location>
</feature>
<feature type="strand" evidence="3">
    <location>
        <begin position="96"/>
        <end position="98"/>
    </location>
</feature>
<feature type="helix" evidence="3">
    <location>
        <begin position="100"/>
        <end position="113"/>
    </location>
</feature>
<feature type="helix" evidence="3">
    <location>
        <begin position="119"/>
        <end position="132"/>
    </location>
</feature>
<feature type="strand" evidence="3">
    <location>
        <begin position="135"/>
        <end position="137"/>
    </location>
</feature>
<feature type="helix" evidence="3">
    <location>
        <begin position="142"/>
        <end position="151"/>
    </location>
</feature>
<organism>
    <name type="scientific">Methanocaldococcus jannaschii (strain ATCC 43067 / DSM 2661 / JAL-1 / JCM 10045 / NBRC 100440)</name>
    <name type="common">Methanococcus jannaschii</name>
    <dbReference type="NCBI Taxonomy" id="243232"/>
    <lineage>
        <taxon>Archaea</taxon>
        <taxon>Methanobacteriati</taxon>
        <taxon>Methanobacteriota</taxon>
        <taxon>Methanomada group</taxon>
        <taxon>Methanococci</taxon>
        <taxon>Methanococcales</taxon>
        <taxon>Methanocaldococcaceae</taxon>
        <taxon>Methanocaldococcus</taxon>
    </lineage>
</organism>
<comment type="function">
    <text evidence="1">Forms part of the ribosomal stalk which helps the ribosome interact with GTP-bound translation factors.</text>
</comment>
<comment type="subunit">
    <text evidence="1">Part of the ribosomal stalk of the 50S ribosomal subunit. Interacts with L10 and the large rRNA to form the base of the stalk. L10 forms an elongated spine to which L12 dimers bind in a sequential fashion forming a multimeric L10(L12)X complex.</text>
</comment>
<comment type="similarity">
    <text evidence="1">Belongs to the universal ribosomal protein uL11 family.</text>
</comment>